<comment type="function">
    <text>Precursors of the cornified envelope of the stratum.</text>
</comment>
<comment type="subunit">
    <text evidence="3">Interacts with CYSRT1; the interaction is direct.</text>
</comment>
<comment type="interaction">
    <interactant intactId="EBI-11973993">
        <id>Q5TA81</id>
    </interactant>
    <interactant intactId="EBI-10173507">
        <id>Q6UY14-3</id>
        <label>ADAMTSL4</label>
    </interactant>
    <organismsDiffer>false</organismsDiffer>
    <experiments>3</experiments>
</comment>
<comment type="interaction">
    <interactant intactId="EBI-11973993">
        <id>Q5TA81</id>
    </interactant>
    <interactant intactId="EBI-1211484">
        <id>P05187</id>
        <label>ALPP</label>
    </interactant>
    <organismsDiffer>false</organismsDiffer>
    <experiments>3</experiments>
</comment>
<comment type="interaction">
    <interactant intactId="EBI-11973993">
        <id>Q5TA81</id>
    </interactant>
    <interactant intactId="EBI-356517">
        <id>Q9UL15</id>
        <label>BAG5</label>
    </interactant>
    <organismsDiffer>false</organismsDiffer>
    <experiments>3</experiments>
</comment>
<comment type="interaction">
    <interactant intactId="EBI-11973993">
        <id>Q5TA81</id>
    </interactant>
    <interactant intactId="EBI-946029">
        <id>Q6P1W5</id>
        <label>C1orf94</label>
    </interactant>
    <organismsDiffer>false</organismsDiffer>
    <experiments>3</experiments>
</comment>
<comment type="interaction">
    <interactant intactId="EBI-11973993">
        <id>Q5TA81</id>
    </interactant>
    <interactant intactId="EBI-744545">
        <id>Q8NEC5</id>
        <label>CATSPER1</label>
    </interactant>
    <organismsDiffer>false</organismsDiffer>
    <experiments>3</experiments>
</comment>
<comment type="interaction">
    <interactant intactId="EBI-11973993">
        <id>Q5TA81</id>
    </interactant>
    <interactant intactId="EBI-11977221">
        <id>Q86Z20</id>
        <label>CCDC125</label>
    </interactant>
    <organismsDiffer>false</organismsDiffer>
    <experiments>3</experiments>
</comment>
<comment type="interaction">
    <interactant intactId="EBI-11973993">
        <id>Q5TA81</id>
    </interactant>
    <interactant intactId="EBI-741528">
        <id>Q9UKJ5</id>
        <label>CHIC2</label>
    </interactant>
    <organismsDiffer>false</organismsDiffer>
    <experiments>3</experiments>
</comment>
<comment type="interaction">
    <interactant intactId="EBI-11973993">
        <id>Q5TA81</id>
    </interactant>
    <interactant intactId="EBI-713677">
        <id>Q9UGL9</id>
        <label>CRCT1</label>
    </interactant>
    <organismsDiffer>false</organismsDiffer>
    <experiments>3</experiments>
</comment>
<comment type="interaction">
    <interactant intactId="EBI-11973993">
        <id>Q5TA81</id>
    </interactant>
    <interactant intactId="EBI-10192698">
        <id>Q02930-3</id>
        <label>CREB5</label>
    </interactant>
    <organismsDiffer>false</organismsDiffer>
    <experiments>3</experiments>
</comment>
<comment type="interaction">
    <interactant intactId="EBI-11973993">
        <id>Q5TA81</id>
    </interactant>
    <interactant intactId="EBI-14156412">
        <id>Q08AG9</id>
        <label>CYP21A2</label>
    </interactant>
    <organismsDiffer>false</organismsDiffer>
    <experiments>3</experiments>
</comment>
<comment type="interaction">
    <interactant intactId="EBI-11973993">
        <id>Q5TA81</id>
    </interactant>
    <interactant intactId="EBI-3867333">
        <id>A8MQ03</id>
        <label>CYSRT1</label>
    </interactant>
    <organismsDiffer>false</organismsDiffer>
    <experiments>4</experiments>
</comment>
<comment type="interaction">
    <interactant intactId="EBI-11973993">
        <id>Q5TA81</id>
    </interactant>
    <interactant intactId="EBI-536772">
        <id>Q12805</id>
        <label>EFEMP1</label>
    </interactant>
    <organismsDiffer>false</organismsDiffer>
    <experiments>3</experiments>
</comment>
<comment type="interaction">
    <interactant intactId="EBI-11973993">
        <id>Q5TA81</id>
    </interactant>
    <interactant intactId="EBI-743414">
        <id>O95967</id>
        <label>EFEMP2</label>
    </interactant>
    <organismsDiffer>false</organismsDiffer>
    <experiments>3</experiments>
</comment>
<comment type="interaction">
    <interactant intactId="EBI-11973993">
        <id>Q5TA81</id>
    </interactant>
    <interactant intactId="EBI-722730">
        <id>P52797</id>
        <label>EFNA3</label>
    </interactant>
    <organismsDiffer>false</organismsDiffer>
    <experiments>3</experiments>
</comment>
<comment type="interaction">
    <interactant intactId="EBI-11973993">
        <id>Q5TA81</id>
    </interactant>
    <interactant intactId="EBI-12006844">
        <id>A6H8Z2</id>
        <label>FAM221B</label>
    </interactant>
    <organismsDiffer>false</organismsDiffer>
    <experiments>3</experiments>
</comment>
<comment type="interaction">
    <interactant intactId="EBI-11973993">
        <id>Q5TA81</id>
    </interactant>
    <interactant intactId="EBI-740785">
        <id>P49639</id>
        <label>HOXA1</label>
    </interactant>
    <organismsDiffer>false</organismsDiffer>
    <experiments>8</experiments>
</comment>
<comment type="interaction">
    <interactant intactId="EBI-11973993">
        <id>Q5TA81</id>
    </interactant>
    <interactant intactId="EBI-11959885">
        <id>Q07627</id>
        <label>KRTAP1-1</label>
    </interactant>
    <organismsDiffer>false</organismsDiffer>
    <experiments>3</experiments>
</comment>
<comment type="interaction">
    <interactant intactId="EBI-11973993">
        <id>Q5TA81</id>
    </interactant>
    <interactant intactId="EBI-11749135">
        <id>Q8IUG1</id>
        <label>KRTAP1-3</label>
    </interactant>
    <organismsDiffer>false</organismsDiffer>
    <experiments>3</experiments>
</comment>
<comment type="interaction">
    <interactant intactId="EBI-11973993">
        <id>Q5TA81</id>
    </interactant>
    <interactant intactId="EBI-11955579">
        <id>P60014</id>
        <label>KRTAP10-10</label>
    </interactant>
    <organismsDiffer>false</organismsDiffer>
    <experiments>3</experiments>
</comment>
<comment type="interaction">
    <interactant intactId="EBI-11973993">
        <id>Q5TA81</id>
    </interactant>
    <interactant intactId="EBI-10172150">
        <id>P60370</id>
        <label>KRTAP10-5</label>
    </interactant>
    <organismsDiffer>false</organismsDiffer>
    <experiments>3</experiments>
</comment>
<comment type="interaction">
    <interactant intactId="EBI-11973993">
        <id>Q5TA81</id>
    </interactant>
    <interactant intactId="EBI-12012928">
        <id>P60371</id>
        <label>KRTAP10-6</label>
    </interactant>
    <organismsDiffer>false</organismsDiffer>
    <experiments>3</experiments>
</comment>
<comment type="interaction">
    <interactant intactId="EBI-11973993">
        <id>Q5TA81</id>
    </interactant>
    <interactant intactId="EBI-10172290">
        <id>P60409</id>
        <label>KRTAP10-7</label>
    </interactant>
    <organismsDiffer>false</organismsDiffer>
    <experiments>5</experiments>
</comment>
<comment type="interaction">
    <interactant intactId="EBI-11973993">
        <id>Q5TA81</id>
    </interactant>
    <interactant intactId="EBI-10171774">
        <id>P60410</id>
        <label>KRTAP10-8</label>
    </interactant>
    <organismsDiffer>false</organismsDiffer>
    <experiments>3</experiments>
</comment>
<comment type="interaction">
    <interactant intactId="EBI-11973993">
        <id>Q5TA81</id>
    </interactant>
    <interactant intactId="EBI-10172052">
        <id>P60411</id>
        <label>KRTAP10-9</label>
    </interactant>
    <organismsDiffer>false</organismsDiffer>
    <experiments>5</experiments>
</comment>
<comment type="interaction">
    <interactant intactId="EBI-11973993">
        <id>Q5TA81</id>
    </interactant>
    <interactant intactId="EBI-10210845">
        <id>P59990</id>
        <label>KRTAP12-1</label>
    </interactant>
    <organismsDiffer>false</organismsDiffer>
    <experiments>3</experiments>
</comment>
<comment type="interaction">
    <interactant intactId="EBI-11973993">
        <id>Q5TA81</id>
    </interactant>
    <interactant intactId="EBI-11953334">
        <id>P60328</id>
        <label>KRTAP12-3</label>
    </interactant>
    <organismsDiffer>false</organismsDiffer>
    <experiments>3</experiments>
</comment>
<comment type="interaction">
    <interactant intactId="EBI-11973993">
        <id>Q5TA81</id>
    </interactant>
    <interactant intactId="EBI-10176396">
        <id>P60329</id>
        <label>KRTAP12-4</label>
    </interactant>
    <organismsDiffer>false</organismsDiffer>
    <experiments>3</experiments>
</comment>
<comment type="interaction">
    <interactant intactId="EBI-11973993">
        <id>Q5TA81</id>
    </interactant>
    <interactant intactId="EBI-11988175">
        <id>Q9BYP8</id>
        <label>KRTAP17-1</label>
    </interactant>
    <organismsDiffer>false</organismsDiffer>
    <experiments>3</experiments>
</comment>
<comment type="interaction">
    <interactant intactId="EBI-11973993">
        <id>Q5TA81</id>
    </interactant>
    <interactant intactId="EBI-14065470">
        <id>Q9BYR9</id>
        <label>KRTAP2-4</label>
    </interactant>
    <organismsDiffer>false</organismsDiffer>
    <experiments>3</experiments>
</comment>
<comment type="interaction">
    <interactant intactId="EBI-11973993">
        <id>Q5TA81</id>
    </interactant>
    <interactant intactId="EBI-10302392">
        <id>Q9BYQ6</id>
        <label>KRTAP4-11</label>
    </interactant>
    <organismsDiffer>false</organismsDiffer>
    <experiments>8</experiments>
</comment>
<comment type="interaction">
    <interactant intactId="EBI-11973993">
        <id>Q5TA81</id>
    </interactant>
    <interactant intactId="EBI-739863">
        <id>Q9BQ66</id>
        <label>KRTAP4-12</label>
    </interactant>
    <organismsDiffer>false</organismsDiffer>
    <experiments>4</experiments>
</comment>
<comment type="interaction">
    <interactant intactId="EBI-11973993">
        <id>Q5TA81</id>
    </interactant>
    <interactant intactId="EBI-10172511">
        <id>Q9BYR5</id>
        <label>KRTAP4-2</label>
    </interactant>
    <organismsDiffer>false</organismsDiffer>
    <experiments>3</experiments>
</comment>
<comment type="interaction">
    <interactant intactId="EBI-11973993">
        <id>Q5TA81</id>
    </interactant>
    <interactant intactId="EBI-11958132">
        <id>Q9BYR3</id>
        <label>KRTAP4-4</label>
    </interactant>
    <organismsDiffer>false</organismsDiffer>
    <experiments>3</experiments>
</comment>
<comment type="interaction">
    <interactant intactId="EBI-11973993">
        <id>Q5TA81</id>
    </interactant>
    <interactant intactId="EBI-11993254">
        <id>Q9BYR2</id>
        <label>KRTAP4-5</label>
    </interactant>
    <organismsDiffer>false</organismsDiffer>
    <experiments>4</experiments>
</comment>
<comment type="interaction">
    <interactant intactId="EBI-11973993">
        <id>Q5TA81</id>
    </interactant>
    <interactant intactId="EBI-11993296">
        <id>Q6L8G4</id>
        <label>KRTAP5-11</label>
    </interactant>
    <organismsDiffer>false</organismsDiffer>
    <experiments>3</experiments>
</comment>
<comment type="interaction">
    <interactant intactId="EBI-11973993">
        <id>Q5TA81</id>
    </interactant>
    <interactant intactId="EBI-11958178">
        <id>Q701N4</id>
        <label>KRTAP5-2</label>
    </interactant>
    <organismsDiffer>false</organismsDiffer>
    <experiments>3</experiments>
</comment>
<comment type="interaction">
    <interactant intactId="EBI-11973993">
        <id>Q5TA81</id>
    </interactant>
    <interactant intactId="EBI-11974251">
        <id>Q6L8H2</id>
        <label>KRTAP5-3</label>
    </interactant>
    <organismsDiffer>false</organismsDiffer>
    <experiments>3</experiments>
</comment>
<comment type="interaction">
    <interactant intactId="EBI-11973993">
        <id>Q5TA81</id>
    </interactant>
    <interactant intactId="EBI-11963072">
        <id>Q6L8H1</id>
        <label>KRTAP5-4</label>
    </interactant>
    <organismsDiffer>false</organismsDiffer>
    <experiments>3</experiments>
</comment>
<comment type="interaction">
    <interactant intactId="EBI-11973993">
        <id>Q5TA81</id>
    </interactant>
    <interactant intactId="EBI-10250562">
        <id>Q6L8G9</id>
        <label>KRTAP5-6</label>
    </interactant>
    <organismsDiffer>false</organismsDiffer>
    <experiments>6</experiments>
</comment>
<comment type="interaction">
    <interactant intactId="EBI-11973993">
        <id>Q5TA81</id>
    </interactant>
    <interactant intactId="EBI-11987425">
        <id>Q6L8G8</id>
        <label>KRTAP5-7</label>
    </interactant>
    <organismsDiffer>false</organismsDiffer>
    <experiments>3</experiments>
</comment>
<comment type="interaction">
    <interactant intactId="EBI-11973993">
        <id>Q5TA81</id>
    </interactant>
    <interactant intactId="EBI-3958099">
        <id>P26371</id>
        <label>KRTAP5-9</label>
    </interactant>
    <organismsDiffer>false</organismsDiffer>
    <experiments>3</experiments>
</comment>
<comment type="interaction">
    <interactant intactId="EBI-11973993">
        <id>Q5TA81</id>
    </interactant>
    <interactant intactId="EBI-22311199">
        <id>Q3LI67</id>
        <label>KRTAP6-3</label>
    </interactant>
    <organismsDiffer>false</organismsDiffer>
    <experiments>3</experiments>
</comment>
<comment type="interaction">
    <interactant intactId="EBI-11973993">
        <id>Q5TA81</id>
    </interactant>
    <interactant intactId="EBI-1044640">
        <id>Q9BYQ4</id>
        <label>KRTAP9-2</label>
    </interactant>
    <organismsDiffer>false</organismsDiffer>
    <experiments>3</experiments>
</comment>
<comment type="interaction">
    <interactant intactId="EBI-11973993">
        <id>Q5TA81</id>
    </interactant>
    <interactant intactId="EBI-1043191">
        <id>Q9BYQ3</id>
        <label>KRTAP9-3</label>
    </interactant>
    <organismsDiffer>false</organismsDiffer>
    <experiments>6</experiments>
</comment>
<comment type="interaction">
    <interactant intactId="EBI-11973993">
        <id>Q5TA81</id>
    </interactant>
    <interactant intactId="EBI-11958364">
        <id>Q9BYQ0</id>
        <label>KRTAP9-8</label>
    </interactant>
    <organismsDiffer>false</organismsDiffer>
    <experiments>3</experiments>
</comment>
<comment type="interaction">
    <interactant intactId="EBI-11973993">
        <id>Q5TA81</id>
    </interactant>
    <interactant intactId="EBI-11962058">
        <id>Q5T7P2</id>
        <label>LCE1A</label>
    </interactant>
    <organismsDiffer>false</organismsDiffer>
    <experiments>6</experiments>
</comment>
<comment type="interaction">
    <interactant intactId="EBI-11973993">
        <id>Q5TA81</id>
    </interactant>
    <interactant intactId="EBI-10245913">
        <id>Q5T7P3</id>
        <label>LCE1B</label>
    </interactant>
    <organismsDiffer>false</organismsDiffer>
    <experiments>3</experiments>
</comment>
<comment type="interaction">
    <interactant intactId="EBI-11973993">
        <id>Q5TA81</id>
    </interactant>
    <interactant intactId="EBI-12224199">
        <id>Q5T751</id>
        <label>LCE1C</label>
    </interactant>
    <organismsDiffer>false</organismsDiffer>
    <experiments>3</experiments>
</comment>
<comment type="interaction">
    <interactant intactId="EBI-11973993">
        <id>Q5TA81</id>
    </interactant>
    <interactant intactId="EBI-11741311">
        <id>Q5T752</id>
        <label>LCE1D</label>
    </interactant>
    <organismsDiffer>false</organismsDiffer>
    <experiments>3</experiments>
</comment>
<comment type="interaction">
    <interactant intactId="EBI-11973993">
        <id>Q5TA81</id>
    </interactant>
    <interactant intactId="EBI-11955335">
        <id>Q5T753</id>
        <label>LCE1E</label>
    </interactant>
    <organismsDiffer>false</organismsDiffer>
    <experiments>3</experiments>
</comment>
<comment type="interaction">
    <interactant intactId="EBI-11973993">
        <id>Q5TA81</id>
    </interactant>
    <interactant intactId="EBI-11958008">
        <id>Q5T754</id>
        <label>LCE1F</label>
    </interactant>
    <organismsDiffer>false</organismsDiffer>
    <experiments>6</experiments>
</comment>
<comment type="interaction">
    <interactant intactId="EBI-11973993">
        <id>Q5TA81</id>
    </interactant>
    <interactant intactId="EBI-10246607">
        <id>Q5TA79</id>
        <label>LCE2A</label>
    </interactant>
    <organismsDiffer>false</organismsDiffer>
    <experiments>3</experiments>
</comment>
<comment type="interaction">
    <interactant intactId="EBI-11973993">
        <id>Q5TA81</id>
    </interactant>
    <interactant intactId="EBI-11478468">
        <id>O14633</id>
        <label>LCE2B</label>
    </interactant>
    <organismsDiffer>false</organismsDiffer>
    <experiments>7</experiments>
</comment>
<comment type="interaction">
    <interactant intactId="EBI-11973993">
        <id>Q5TA81</id>
    </interactant>
    <interactant intactId="EBI-11973993">
        <id>Q5TA81</id>
        <label>LCE2C</label>
    </interactant>
    <organismsDiffer>false</organismsDiffer>
    <experiments>3</experiments>
</comment>
<comment type="interaction">
    <interactant intactId="EBI-11973993">
        <id>Q5TA81</id>
    </interactant>
    <interactant intactId="EBI-10246750">
        <id>Q5TA82</id>
        <label>LCE2D</label>
    </interactant>
    <organismsDiffer>false</organismsDiffer>
    <experiments>3</experiments>
</comment>
<comment type="interaction">
    <interactant intactId="EBI-11973993">
        <id>Q5TA81</id>
    </interactant>
    <interactant intactId="EBI-9394625">
        <id>Q5TA76</id>
        <label>LCE3A</label>
    </interactant>
    <organismsDiffer>false</organismsDiffer>
    <experiments>3</experiments>
</comment>
<comment type="interaction">
    <interactant intactId="EBI-11973993">
        <id>Q5TA81</id>
    </interactant>
    <interactant intactId="EBI-11974495">
        <id>Q5TA77</id>
        <label>LCE3B</label>
    </interactant>
    <organismsDiffer>false</organismsDiffer>
    <experiments>3</experiments>
</comment>
<comment type="interaction">
    <interactant intactId="EBI-11973993">
        <id>Q5TA81</id>
    </interactant>
    <interactant intactId="EBI-6658837">
        <id>Q9BYE3</id>
        <label>LCE3D</label>
    </interactant>
    <organismsDiffer>false</organismsDiffer>
    <experiments>3</experiments>
</comment>
<comment type="interaction">
    <interactant intactId="EBI-11973993">
        <id>Q5TA81</id>
    </interactant>
    <interactant intactId="EBI-10246358">
        <id>Q5TA78</id>
        <label>LCE4A</label>
    </interactant>
    <organismsDiffer>false</organismsDiffer>
    <experiments>8</experiments>
</comment>
<comment type="interaction">
    <interactant intactId="EBI-11973993">
        <id>Q5TA81</id>
    </interactant>
    <interactant intactId="EBI-11955689">
        <id>Q5TCM9</id>
        <label>LCE5A</label>
    </interactant>
    <organismsDiffer>false</organismsDiffer>
    <experiments>6</experiments>
</comment>
<comment type="interaction">
    <interactant intactId="EBI-11973993">
        <id>Q5TA81</id>
    </interactant>
    <interactant intactId="EBI-2683507">
        <id>Q8N5G2</id>
        <label>MACO1</label>
    </interactant>
    <organismsDiffer>false</organismsDiffer>
    <experiments>3</experiments>
</comment>
<comment type="interaction">
    <interactant intactId="EBI-11973993">
        <id>Q5TA81</id>
    </interactant>
    <interactant intactId="EBI-6979889">
        <id>Q92692-2</id>
        <label>NECTIN2</label>
    </interactant>
    <organismsDiffer>false</organismsDiffer>
    <experiments>3</experiments>
</comment>
<comment type="interaction">
    <interactant intactId="EBI-11973993">
        <id>Q5TA81</id>
    </interactant>
    <interactant intactId="EBI-22310682">
        <id>P0DPK4</id>
        <label>NOTCH2NLC</label>
    </interactant>
    <organismsDiffer>false</organismsDiffer>
    <experiments>3</experiments>
</comment>
<comment type="interaction">
    <interactant intactId="EBI-11973993">
        <id>Q5TA81</id>
    </interactant>
    <interactant intactId="EBI-741158">
        <id>Q96HA8</id>
        <label>NTAQ1</label>
    </interactant>
    <organismsDiffer>false</organismsDiffer>
    <experiments>3</experiments>
</comment>
<comment type="interaction">
    <interactant intactId="EBI-11973993">
        <id>Q5TA81</id>
    </interactant>
    <interactant intactId="EBI-1210753">
        <id>Q7Z417</id>
        <label>NUFIP2</label>
    </interactant>
    <organismsDiffer>false</organismsDiffer>
    <experiments>3</experiments>
</comment>
<comment type="interaction">
    <interactant intactId="EBI-11973993">
        <id>Q5TA81</id>
    </interactant>
    <interactant intactId="EBI-740446">
        <id>P32242</id>
        <label>OTX1</label>
    </interactant>
    <organismsDiffer>false</organismsDiffer>
    <experiments>3</experiments>
</comment>
<comment type="interaction">
    <interactant intactId="EBI-11973993">
        <id>Q5TA81</id>
    </interactant>
    <interactant intactId="EBI-11956269">
        <id>Q92824-2</id>
        <label>PCSK5</label>
    </interactant>
    <organismsDiffer>false</organismsDiffer>
    <experiments>6</experiments>
</comment>
<comment type="interaction">
    <interactant intactId="EBI-11973993">
        <id>Q5TA81</id>
    </interactant>
    <interactant intactId="EBI-348567">
        <id>O75928-2</id>
        <label>PIAS2</label>
    </interactant>
    <organismsDiffer>false</organismsDiffer>
    <experiments>3</experiments>
</comment>
<comment type="interaction">
    <interactant intactId="EBI-11973993">
        <id>Q5TA81</id>
    </interactant>
    <interactant intactId="EBI-7199479">
        <id>Q8WUK0</id>
        <label>PTPMT1</label>
    </interactant>
    <organismsDiffer>false</organismsDiffer>
    <experiments>3</experiments>
</comment>
<comment type="interaction">
    <interactant intactId="EBI-11973993">
        <id>Q5TA81</id>
    </interactant>
    <interactant intactId="EBI-3918154">
        <id>Q9UGC6</id>
        <label>RGS17</label>
    </interactant>
    <organismsDiffer>false</organismsDiffer>
    <experiments>3</experiments>
</comment>
<comment type="interaction">
    <interactant intactId="EBI-11973993">
        <id>Q5TA81</id>
    </interactant>
    <interactant intactId="EBI-10178530">
        <id>O76081-6</id>
        <label>RGS20</label>
    </interactant>
    <organismsDiffer>false</organismsDiffer>
    <experiments>3</experiments>
</comment>
<comment type="interaction">
    <interactant intactId="EBI-11973993">
        <id>Q5TA81</id>
    </interactant>
    <interactant intactId="EBI-2340927">
        <id>P78317</id>
        <label>RNF4</label>
    </interactant>
    <organismsDiffer>false</organismsDiffer>
    <experiments>5</experiments>
</comment>
<comment type="interaction">
    <interactant intactId="EBI-11973993">
        <id>Q5TA81</id>
    </interactant>
    <interactant intactId="EBI-1051105">
        <id>Q92504</id>
        <label>SLC39A7</label>
    </interactant>
    <organismsDiffer>false</organismsDiffer>
    <experiments>3</experiments>
</comment>
<comment type="interaction">
    <interactant intactId="EBI-11973993">
        <id>Q5TA81</id>
    </interactant>
    <interactant intactId="EBI-750494">
        <id>P49901</id>
        <label>SMCP</label>
    </interactant>
    <organismsDiffer>false</organismsDiffer>
    <experiments>3</experiments>
</comment>
<comment type="interaction">
    <interactant intactId="EBI-11973993">
        <id>Q5TA81</id>
    </interactant>
    <interactant intactId="EBI-3866665">
        <id>O43609</id>
        <label>SPRY1</label>
    </interactant>
    <organismsDiffer>false</organismsDiffer>
    <experiments>3</experiments>
</comment>
<comment type="interaction">
    <interactant intactId="EBI-11973993">
        <id>Q5TA81</id>
    </interactant>
    <interactant intactId="EBI-12140683">
        <id>Q9BX79-6</id>
        <label>STRA6</label>
    </interactant>
    <organismsDiffer>false</organismsDiffer>
    <experiments>3</experiments>
</comment>
<comment type="interaction">
    <interactant intactId="EBI-11973993">
        <id>Q5TA81</id>
    </interactant>
    <interactant intactId="EBI-4324738">
        <id>P09758</id>
        <label>TACSTD2</label>
    </interactant>
    <organismsDiffer>false</organismsDiffer>
    <experiments>3</experiments>
</comment>
<comment type="interaction">
    <interactant intactId="EBI-11973993">
        <id>Q5TA81</id>
    </interactant>
    <interactant intactId="EBI-747259">
        <id>Q03518</id>
        <label>TAP1</label>
    </interactant>
    <organismsDiffer>false</organismsDiffer>
    <experiments>3</experiments>
</comment>
<comment type="interaction">
    <interactant intactId="EBI-11973993">
        <id>Q5TA81</id>
    </interactant>
    <interactant intactId="EBI-779636">
        <id>P01137</id>
        <label>TGFB1</label>
    </interactant>
    <organismsDiffer>false</organismsDiffer>
    <experiments>3</experiments>
</comment>
<comment type="interaction">
    <interactant intactId="EBI-11973993">
        <id>Q5TA81</id>
    </interactant>
    <interactant intactId="EBI-2115348">
        <id>O76062</id>
        <label>TM7SF2</label>
    </interactant>
    <organismsDiffer>false</organismsDiffer>
    <experiments>3</experiments>
</comment>
<comment type="interaction">
    <interactant intactId="EBI-11973993">
        <id>Q5TA81</id>
    </interactant>
    <interactant intactId="EBI-5235829">
        <id>Q8IWZ5</id>
        <label>TRIM42</label>
    </interactant>
    <organismsDiffer>false</organismsDiffer>
    <experiments>8</experiments>
</comment>
<comment type="interaction">
    <interactant intactId="EBI-11973993">
        <id>Q5TA81</id>
    </interactant>
    <interactant intactId="EBI-10180829">
        <id>Q7KZS0</id>
        <label>UBE2I</label>
    </interactant>
    <organismsDiffer>false</organismsDiffer>
    <experiments>3</experiments>
</comment>
<comment type="interaction">
    <interactant intactId="EBI-11973993">
        <id>Q5TA81</id>
    </interactant>
    <interactant intactId="EBI-10249550">
        <id>Q6EMK4</id>
        <label>VASN</label>
    </interactant>
    <organismsDiffer>false</organismsDiffer>
    <experiments>3</experiments>
</comment>
<comment type="interaction">
    <interactant intactId="EBI-11973993">
        <id>Q5TA81</id>
    </interactant>
    <interactant intactId="EBI-11957238">
        <id>Q2TAL6</id>
        <label>VWC2</label>
    </interactant>
    <organismsDiffer>false</organismsDiffer>
    <experiments>3</experiments>
</comment>
<comment type="interaction">
    <interactant intactId="EBI-11973993">
        <id>Q5TA81</id>
    </interactant>
    <interactant intactId="EBI-6448284">
        <id>Q8WTP9</id>
        <label>XAGE3</label>
    </interactant>
    <organismsDiffer>false</organismsDiffer>
    <experiments>3</experiments>
</comment>
<comment type="tissue specificity">
    <text evidence="2">Skin-specific. Expression was readily detected in adult trunk skin, adult arm skin, fetal skin, penal skin, vulva, esophagus and tongue. Not expressed in the cervix, rectum, lung, colon, or placenta.</text>
</comment>
<comment type="induction">
    <text evidence="2">By calcium and UVB.</text>
</comment>
<comment type="miscellaneous">
    <text>Belongs to the LCE cluster present on 1q21.</text>
</comment>
<comment type="similarity">
    <text evidence="4">Belongs to the LCE family.</text>
</comment>
<protein>
    <recommendedName>
        <fullName>Late cornified envelope protein 2C</fullName>
    </recommendedName>
    <alternativeName>
        <fullName>Late envelope protein 11</fullName>
    </alternativeName>
</protein>
<keyword id="KW-0417">Keratinization</keyword>
<keyword id="KW-1185">Reference proteome</keyword>
<name>LCE2C_HUMAN</name>
<organism>
    <name type="scientific">Homo sapiens</name>
    <name type="common">Human</name>
    <dbReference type="NCBI Taxonomy" id="9606"/>
    <lineage>
        <taxon>Eukaryota</taxon>
        <taxon>Metazoa</taxon>
        <taxon>Chordata</taxon>
        <taxon>Craniata</taxon>
        <taxon>Vertebrata</taxon>
        <taxon>Euteleostomi</taxon>
        <taxon>Mammalia</taxon>
        <taxon>Eutheria</taxon>
        <taxon>Euarchontoglires</taxon>
        <taxon>Primates</taxon>
        <taxon>Haplorrhini</taxon>
        <taxon>Catarrhini</taxon>
        <taxon>Hominidae</taxon>
        <taxon>Homo</taxon>
    </lineage>
</organism>
<evidence type="ECO:0000256" key="1">
    <source>
        <dbReference type="SAM" id="MobiDB-lite"/>
    </source>
</evidence>
<evidence type="ECO:0000269" key="2">
    <source>
    </source>
</evidence>
<evidence type="ECO:0000269" key="3">
    <source>
    </source>
</evidence>
<evidence type="ECO:0000305" key="4"/>
<dbReference type="EMBL" id="AL139247">
    <property type="status" value="NOT_ANNOTATED_CDS"/>
    <property type="molecule type" value="Genomic_DNA"/>
</dbReference>
<dbReference type="CCDS" id="CCDS1019.1"/>
<dbReference type="RefSeq" id="NP_848516.1">
    <property type="nucleotide sequence ID" value="NM_178429.5"/>
</dbReference>
<dbReference type="BioGRID" id="131646">
    <property type="interactions" value="88"/>
</dbReference>
<dbReference type="FunCoup" id="Q5TA81">
    <property type="interactions" value="31"/>
</dbReference>
<dbReference type="IntAct" id="Q5TA81">
    <property type="interactions" value="84"/>
</dbReference>
<dbReference type="STRING" id="9606.ENSP00000357772"/>
<dbReference type="BioMuta" id="LCE2C"/>
<dbReference type="MassIVE" id="Q5TA81"/>
<dbReference type="PaxDb" id="9606-ENSP00000357772"/>
<dbReference type="PeptideAtlas" id="Q5TA81"/>
<dbReference type="Pumba" id="Q5TA81"/>
<dbReference type="DNASU" id="353140"/>
<dbReference type="Ensembl" id="ENST00000368783.2">
    <property type="protein sequence ID" value="ENSP00000357772.1"/>
    <property type="gene ID" value="ENSG00000187180.4"/>
</dbReference>
<dbReference type="GeneID" id="353140"/>
<dbReference type="KEGG" id="hsa:353140"/>
<dbReference type="MANE-Select" id="ENST00000368783.2">
    <property type="protein sequence ID" value="ENSP00000357772.1"/>
    <property type="RefSeq nucleotide sequence ID" value="NM_178429.5"/>
    <property type="RefSeq protein sequence ID" value="NP_848516.1"/>
</dbReference>
<dbReference type="UCSC" id="uc001fah.5">
    <property type="organism name" value="human"/>
</dbReference>
<dbReference type="AGR" id="HGNC:29460"/>
<dbReference type="CTD" id="353140"/>
<dbReference type="GeneCards" id="LCE2C"/>
<dbReference type="HGNC" id="HGNC:29460">
    <property type="gene designation" value="LCE2C"/>
</dbReference>
<dbReference type="HPA" id="ENSG00000187180">
    <property type="expression patterns" value="Tissue enriched (skin)"/>
</dbReference>
<dbReference type="MIM" id="612611">
    <property type="type" value="gene"/>
</dbReference>
<dbReference type="neXtProt" id="NX_Q5TA81"/>
<dbReference type="PharmGKB" id="PA134903160"/>
<dbReference type="VEuPathDB" id="HostDB:ENSG00000187180"/>
<dbReference type="eggNOG" id="ENOG502TDZA">
    <property type="taxonomic scope" value="Eukaryota"/>
</dbReference>
<dbReference type="GeneTree" id="ENSGT00940000161842"/>
<dbReference type="HOGENOM" id="CLU_152038_0_0_1"/>
<dbReference type="InParanoid" id="Q5TA81"/>
<dbReference type="OMA" id="PECCECE"/>
<dbReference type="PAN-GO" id="Q5TA81">
    <property type="GO annotations" value="0 GO annotations based on evolutionary models"/>
</dbReference>
<dbReference type="PathwayCommons" id="Q5TA81"/>
<dbReference type="Reactome" id="R-HSA-6809371">
    <property type="pathway name" value="Formation of the cornified envelope"/>
</dbReference>
<dbReference type="SignaLink" id="Q5TA81"/>
<dbReference type="BioGRID-ORCS" id="353140">
    <property type="hits" value="219 hits in 1034 CRISPR screens"/>
</dbReference>
<dbReference type="GenomeRNAi" id="353140"/>
<dbReference type="Pharos" id="Q5TA81">
    <property type="development level" value="Tdark"/>
</dbReference>
<dbReference type="PRO" id="PR:Q5TA81"/>
<dbReference type="Proteomes" id="UP000005640">
    <property type="component" value="Chromosome 1"/>
</dbReference>
<dbReference type="RNAct" id="Q5TA81">
    <property type="molecule type" value="protein"/>
</dbReference>
<dbReference type="Bgee" id="ENSG00000187180">
    <property type="expression patterns" value="Expressed in skin of leg and 61 other cell types or tissues"/>
</dbReference>
<dbReference type="GO" id="GO:0042802">
    <property type="term" value="F:identical protein binding"/>
    <property type="evidence" value="ECO:0000353"/>
    <property type="project" value="IntAct"/>
</dbReference>
<dbReference type="GO" id="GO:0031424">
    <property type="term" value="P:keratinization"/>
    <property type="evidence" value="ECO:0007669"/>
    <property type="project" value="UniProtKB-KW"/>
</dbReference>
<dbReference type="InterPro" id="IPR028205">
    <property type="entry name" value="LCE"/>
</dbReference>
<dbReference type="Pfam" id="PF14672">
    <property type="entry name" value="LCE"/>
    <property type="match status" value="2"/>
</dbReference>
<dbReference type="PRINTS" id="PR00021">
    <property type="entry name" value="PRORICH"/>
</dbReference>
<proteinExistence type="evidence at protein level"/>
<gene>
    <name type="primary">LCE2C</name>
    <name type="synonym">LEP11</name>
</gene>
<feature type="chain" id="PRO_0000235331" description="Late cornified envelope protein 2C">
    <location>
        <begin position="1"/>
        <end position="110"/>
    </location>
</feature>
<feature type="region of interest" description="Disordered" evidence="1">
    <location>
        <begin position="1"/>
        <end position="23"/>
    </location>
</feature>
<feature type="compositionally biased region" description="Low complexity" evidence="1">
    <location>
        <begin position="1"/>
        <end position="10"/>
    </location>
</feature>
<feature type="compositionally biased region" description="Pro residues" evidence="1">
    <location>
        <begin position="11"/>
        <end position="23"/>
    </location>
</feature>
<accession>Q5TA81</accession>
<sequence length="110" mass="11224">MSCQQNQQQCQPPPKCPPKCTPKCPPKCPPKCPPQCPAPCFPAVSSCCGPSSGSCCGPSSGGCCSSGAGGCSLSHHRPRLFHRRRHQSPDCCESEPSGGSGCCHSSGGCC</sequence>
<reference key="1">
    <citation type="journal article" date="2006" name="Nature">
        <title>The DNA sequence and biological annotation of human chromosome 1.</title>
        <authorList>
            <person name="Gregory S.G."/>
            <person name="Barlow K.F."/>
            <person name="McLay K.E."/>
            <person name="Kaul R."/>
            <person name="Swarbreck D."/>
            <person name="Dunham A."/>
            <person name="Scott C.E."/>
            <person name="Howe K.L."/>
            <person name="Woodfine K."/>
            <person name="Spencer C.C.A."/>
            <person name="Jones M.C."/>
            <person name="Gillson C."/>
            <person name="Searle S."/>
            <person name="Zhou Y."/>
            <person name="Kokocinski F."/>
            <person name="McDonald L."/>
            <person name="Evans R."/>
            <person name="Phillips K."/>
            <person name="Atkinson A."/>
            <person name="Cooper R."/>
            <person name="Jones C."/>
            <person name="Hall R.E."/>
            <person name="Andrews T.D."/>
            <person name="Lloyd C."/>
            <person name="Ainscough R."/>
            <person name="Almeida J.P."/>
            <person name="Ambrose K.D."/>
            <person name="Anderson F."/>
            <person name="Andrew R.W."/>
            <person name="Ashwell R.I.S."/>
            <person name="Aubin K."/>
            <person name="Babbage A.K."/>
            <person name="Bagguley C.L."/>
            <person name="Bailey J."/>
            <person name="Beasley H."/>
            <person name="Bethel G."/>
            <person name="Bird C.P."/>
            <person name="Bray-Allen S."/>
            <person name="Brown J.Y."/>
            <person name="Brown A.J."/>
            <person name="Buckley D."/>
            <person name="Burton J."/>
            <person name="Bye J."/>
            <person name="Carder C."/>
            <person name="Chapman J.C."/>
            <person name="Clark S.Y."/>
            <person name="Clarke G."/>
            <person name="Clee C."/>
            <person name="Cobley V."/>
            <person name="Collier R.E."/>
            <person name="Corby N."/>
            <person name="Coville G.J."/>
            <person name="Davies J."/>
            <person name="Deadman R."/>
            <person name="Dunn M."/>
            <person name="Earthrowl M."/>
            <person name="Ellington A.G."/>
            <person name="Errington H."/>
            <person name="Frankish A."/>
            <person name="Frankland J."/>
            <person name="French L."/>
            <person name="Garner P."/>
            <person name="Garnett J."/>
            <person name="Gay L."/>
            <person name="Ghori M.R.J."/>
            <person name="Gibson R."/>
            <person name="Gilby L.M."/>
            <person name="Gillett W."/>
            <person name="Glithero R.J."/>
            <person name="Grafham D.V."/>
            <person name="Griffiths C."/>
            <person name="Griffiths-Jones S."/>
            <person name="Grocock R."/>
            <person name="Hammond S."/>
            <person name="Harrison E.S.I."/>
            <person name="Hart E."/>
            <person name="Haugen E."/>
            <person name="Heath P.D."/>
            <person name="Holmes S."/>
            <person name="Holt K."/>
            <person name="Howden P.J."/>
            <person name="Hunt A.R."/>
            <person name="Hunt S.E."/>
            <person name="Hunter G."/>
            <person name="Isherwood J."/>
            <person name="James R."/>
            <person name="Johnson C."/>
            <person name="Johnson D."/>
            <person name="Joy A."/>
            <person name="Kay M."/>
            <person name="Kershaw J.K."/>
            <person name="Kibukawa M."/>
            <person name="Kimberley A.M."/>
            <person name="King A."/>
            <person name="Knights A.J."/>
            <person name="Lad H."/>
            <person name="Laird G."/>
            <person name="Lawlor S."/>
            <person name="Leongamornlert D.A."/>
            <person name="Lloyd D.M."/>
            <person name="Loveland J."/>
            <person name="Lovell J."/>
            <person name="Lush M.J."/>
            <person name="Lyne R."/>
            <person name="Martin S."/>
            <person name="Mashreghi-Mohammadi M."/>
            <person name="Matthews L."/>
            <person name="Matthews N.S.W."/>
            <person name="McLaren S."/>
            <person name="Milne S."/>
            <person name="Mistry S."/>
            <person name="Moore M.J.F."/>
            <person name="Nickerson T."/>
            <person name="O'Dell C.N."/>
            <person name="Oliver K."/>
            <person name="Palmeiri A."/>
            <person name="Palmer S.A."/>
            <person name="Parker A."/>
            <person name="Patel D."/>
            <person name="Pearce A.V."/>
            <person name="Peck A.I."/>
            <person name="Pelan S."/>
            <person name="Phelps K."/>
            <person name="Phillimore B.J."/>
            <person name="Plumb R."/>
            <person name="Rajan J."/>
            <person name="Raymond C."/>
            <person name="Rouse G."/>
            <person name="Saenphimmachak C."/>
            <person name="Sehra H.K."/>
            <person name="Sheridan E."/>
            <person name="Shownkeen R."/>
            <person name="Sims S."/>
            <person name="Skuce C.D."/>
            <person name="Smith M."/>
            <person name="Steward C."/>
            <person name="Subramanian S."/>
            <person name="Sycamore N."/>
            <person name="Tracey A."/>
            <person name="Tromans A."/>
            <person name="Van Helmond Z."/>
            <person name="Wall M."/>
            <person name="Wallis J.M."/>
            <person name="White S."/>
            <person name="Whitehead S.L."/>
            <person name="Wilkinson J.E."/>
            <person name="Willey D.L."/>
            <person name="Williams H."/>
            <person name="Wilming L."/>
            <person name="Wray P.W."/>
            <person name="Wu Z."/>
            <person name="Coulson A."/>
            <person name="Vaudin M."/>
            <person name="Sulston J.E."/>
            <person name="Durbin R.M."/>
            <person name="Hubbard T."/>
            <person name="Wooster R."/>
            <person name="Dunham I."/>
            <person name="Carter N.P."/>
            <person name="McVean G."/>
            <person name="Ross M.T."/>
            <person name="Harrow J."/>
            <person name="Olson M.V."/>
            <person name="Beck S."/>
            <person name="Rogers J."/>
            <person name="Bentley D.R."/>
        </authorList>
    </citation>
    <scope>NUCLEOTIDE SEQUENCE [LARGE SCALE GENOMIC DNA]</scope>
</reference>
<reference key="2">
    <citation type="journal article" date="2005" name="J. Invest. Dermatol.">
        <title>Late cornified envelope family in differentiating epithelia -- response to calcium and ultraviolet irradiation.</title>
        <authorList>
            <person name="Jackson B."/>
            <person name="Tilli C.L."/>
            <person name="Hardman M."/>
            <person name="Avilion A."/>
            <person name="Macleod M."/>
            <person name="Ashcroft G."/>
            <person name="Byrne C."/>
        </authorList>
    </citation>
    <scope>NOMENCLATURE</scope>
    <scope>TISSUE SPECIFICITY</scope>
    <scope>INDUCTION BY CALCIUM AND UVB</scope>
</reference>
<reference key="3">
    <citation type="journal article" date="2023" name="J. Invest. Dermatol.">
        <title>CYSRT1: An Antimicrobial Epidermal Protein that Can Interact with Late Cornified Envelope Proteins.</title>
        <authorList>
            <person name="Niehues H."/>
            <person name="Rikken G."/>
            <person name="Kersten F.F.J."/>
            <person name="Eeftens J.M."/>
            <person name="van Vlijmen-Willems I.M.J.J."/>
            <person name="Rodijk-Olthuis D."/>
            <person name="Jansen P.A.M."/>
            <person name="Hendriks W.J.A.J."/>
            <person name="Ederveen T.H.A."/>
            <person name="Schalkwijk J."/>
            <person name="van den Bogaard E.H."/>
            <person name="Zeeuwen P.L.J.M."/>
        </authorList>
    </citation>
    <scope>INTERACTION WITH CYSRT1</scope>
</reference>